<proteinExistence type="inferred from homology"/>
<protein>
    <recommendedName>
        <fullName>Movement protein</fullName>
        <shortName>MP</shortName>
    </recommendedName>
</protein>
<comment type="function">
    <text>Involved in the viral transport within, and between cells.</text>
</comment>
<comment type="subunit">
    <text evidence="1">Interacts with the capsid protein (CP). Part of a MP-CP-viral DNA complex (By similarity).</text>
</comment>
<comment type="subcellular location">
    <subcellularLocation>
        <location evidence="4">Host membrane</location>
        <topology evidence="4">Single-pass membrane protein</topology>
    </subcellularLocation>
</comment>
<comment type="similarity">
    <text evidence="4">Belongs to the mastrevirus movement protein family.</text>
</comment>
<name>MP_MSVTA</name>
<gene>
    <name type="ORF">V2</name>
</gene>
<accession>Q9IGY9</accession>
<accession>Q9YPY4</accession>
<feature type="chain" id="PRO_0000316928" description="Movement protein">
    <location>
        <begin position="1"/>
        <end position="101"/>
    </location>
</feature>
<feature type="transmembrane region" description="Helical" evidence="2">
    <location>
        <begin position="30"/>
        <end position="50"/>
    </location>
</feature>
<feature type="region of interest" description="Disordered" evidence="3">
    <location>
        <begin position="1"/>
        <end position="22"/>
    </location>
</feature>
<feature type="region of interest" description="Disordered" evidence="3">
    <location>
        <begin position="79"/>
        <end position="101"/>
    </location>
</feature>
<feature type="compositionally biased region" description="Polar residues" evidence="3">
    <location>
        <begin position="80"/>
        <end position="92"/>
    </location>
</feature>
<organismHost>
    <name type="scientific">Avena sativa</name>
    <name type="common">Oat</name>
    <dbReference type="NCBI Taxonomy" id="4498"/>
</organismHost>
<organismHost>
    <name type="scientific">Axonopus compressus</name>
    <dbReference type="NCBI Taxonomy" id="217170"/>
</organismHost>
<organismHost>
    <name type="scientific">Cenchrus americanus</name>
    <name type="common">Pearl millet</name>
    <name type="synonym">Pennisetum glaucum</name>
    <dbReference type="NCBI Taxonomy" id="4543"/>
</organismHost>
<organismHost>
    <name type="scientific">Cenchrus polystachios</name>
    <dbReference type="NCBI Taxonomy" id="281129"/>
</organismHost>
<organismHost>
    <name type="scientific">Coix lacryma-jobi</name>
    <name type="common">Job's tears</name>
    <dbReference type="NCBI Taxonomy" id="4505"/>
</organismHost>
<organismHost>
    <name type="scientific">Dactyloctenium aegyptium</name>
    <dbReference type="NCBI Taxonomy" id="270102"/>
</organismHost>
<organismHost>
    <name type="scientific">Digitaria</name>
    <dbReference type="NCBI Taxonomy" id="66017"/>
</organismHost>
<organismHost>
    <name type="scientific">Echinochloa colona</name>
    <dbReference type="NCBI Taxonomy" id="90396"/>
</organismHost>
<organismHost>
    <name type="scientific">Eleusine coracana</name>
    <name type="common">Indian finger millet</name>
    <name type="synonym">Ragi</name>
    <dbReference type="NCBI Taxonomy" id="4511"/>
</organismHost>
<organismHost>
    <name type="scientific">Eleusine indica</name>
    <name type="common">Goosegrass</name>
    <name type="synonym">Cynosurus indicus</name>
    <dbReference type="NCBI Taxonomy" id="29674"/>
</organismHost>
<organismHost>
    <name type="scientific">Hordeum vulgare</name>
    <name type="common">Barley</name>
    <dbReference type="NCBI Taxonomy" id="4513"/>
</organismHost>
<organismHost>
    <name type="scientific">Megathyrsus maximus</name>
    <dbReference type="NCBI Taxonomy" id="59788"/>
</organismHost>
<organismHost>
    <name type="scientific">Melinis repens</name>
    <name type="common">Red Natal grass</name>
    <name type="synonym">Rhynchelytrum repens</name>
    <dbReference type="NCBI Taxonomy" id="29709"/>
</organismHost>
<organismHost>
    <name type="scientific">Oryza glaberrima</name>
    <name type="common">African rice</name>
    <dbReference type="NCBI Taxonomy" id="4538"/>
</organismHost>
<organismHost>
    <name type="scientific">Oryza sativa</name>
    <name type="common">Rice</name>
    <dbReference type="NCBI Taxonomy" id="4530"/>
</organismHost>
<organismHost>
    <name type="scientific">Paspalum conjugatum</name>
    <name type="common">Hilo grass</name>
    <dbReference type="NCBI Taxonomy" id="158143"/>
</organismHost>
<organismHost>
    <name type="scientific">Paspalum notatum</name>
    <name type="common">Bahia grass</name>
    <dbReference type="NCBI Taxonomy" id="147272"/>
</organismHost>
<organismHost>
    <name type="scientific">Paspalum scrobiculatum</name>
    <dbReference type="NCBI Taxonomy" id="173849"/>
</organismHost>
<organismHost>
    <name type="scientific">Rottboellia cochinchinensis</name>
    <dbReference type="NCBI Taxonomy" id="300125"/>
</organismHost>
<organismHost>
    <name type="scientific">Saccharum officinarum</name>
    <name type="common">Sugarcane</name>
    <dbReference type="NCBI Taxonomy" id="4547"/>
</organismHost>
<organismHost>
    <name type="scientific">Setaria barbata</name>
    <dbReference type="NCBI Taxonomy" id="192628"/>
</organismHost>
<organismHost>
    <name type="scientific">Triticum aestivum</name>
    <name type="common">Wheat</name>
    <dbReference type="NCBI Taxonomy" id="4565"/>
</organismHost>
<organismHost>
    <name type="scientific">Urochloa deflexa</name>
    <dbReference type="NCBI Taxonomy" id="240436"/>
</organismHost>
<organismHost>
    <name type="scientific">Zea mays</name>
    <name type="common">Maize</name>
    <dbReference type="NCBI Taxonomy" id="4577"/>
</organismHost>
<reference key="1">
    <citation type="submission" date="2000-03" db="EMBL/GenBank/DDBJ databases">
        <title>Characterization of three maize streak viruses.</title>
        <authorList>
            <person name="Willment J.A."/>
            <person name="Martin D.P."/>
            <person name="Rybicki E.P."/>
        </authorList>
    </citation>
    <scope>NUCLEOTIDE SEQUENCE [GENOMIC DNA]</scope>
</reference>
<reference key="2">
    <citation type="journal article" date="2001" name="J. Virol. Methods">
        <title>Analysis of the diversity of African streak mastreviruses using PCR-generated RFLPs and partial sequence data.</title>
        <authorList>
            <person name="Willment J.A."/>
            <person name="Martin D.P."/>
            <person name="Rybicki E.P."/>
        </authorList>
    </citation>
    <scope>NUCLEOTIDE SEQUENCE [GENOMIC DNA] OF 1-71</scope>
</reference>
<keyword id="KW-1043">Host membrane</keyword>
<keyword id="KW-0472">Membrane</keyword>
<keyword id="KW-0812">Transmembrane</keyword>
<keyword id="KW-1133">Transmembrane helix</keyword>
<keyword id="KW-0813">Transport</keyword>
<keyword id="KW-0916">Viral movement protein</keyword>
<dbReference type="EMBL" id="AF239962">
    <property type="protein sequence ID" value="AAF97761.1"/>
    <property type="molecule type" value="Genomic_DNA"/>
</dbReference>
<dbReference type="EMBL" id="AJ012636">
    <property type="protein sequence ID" value="CAA10087.1"/>
    <property type="molecule type" value="Genomic_DNA"/>
</dbReference>
<dbReference type="SMR" id="Q9IGY9"/>
<dbReference type="Proteomes" id="UP000007782">
    <property type="component" value="Segment"/>
</dbReference>
<dbReference type="GO" id="GO:0033644">
    <property type="term" value="C:host cell membrane"/>
    <property type="evidence" value="ECO:0007669"/>
    <property type="project" value="UniProtKB-SubCell"/>
</dbReference>
<dbReference type="GO" id="GO:0016020">
    <property type="term" value="C:membrane"/>
    <property type="evidence" value="ECO:0007669"/>
    <property type="project" value="UniProtKB-KW"/>
</dbReference>
<dbReference type="GO" id="GO:0046740">
    <property type="term" value="P:transport of virus in host, cell to cell"/>
    <property type="evidence" value="ECO:0007669"/>
    <property type="project" value="UniProtKB-KW"/>
</dbReference>
<dbReference type="InterPro" id="IPR002621">
    <property type="entry name" value="Gemini_mov"/>
</dbReference>
<dbReference type="Pfam" id="PF01708">
    <property type="entry name" value="Gemini_mov"/>
    <property type="match status" value="1"/>
</dbReference>
<organism>
    <name type="scientific">Maize streak virus genotype B (isolate Tas)</name>
    <name type="common">MSV</name>
    <dbReference type="NCBI Taxonomy" id="268409"/>
    <lineage>
        <taxon>Viruses</taxon>
        <taxon>Monodnaviria</taxon>
        <taxon>Shotokuvirae</taxon>
        <taxon>Cressdnaviricota</taxon>
        <taxon>Repensiviricetes</taxon>
        <taxon>Geplafuvirales</taxon>
        <taxon>Geminiviridae</taxon>
        <taxon>Mastrevirus</taxon>
        <taxon>Maize streak virus</taxon>
    </lineage>
</organism>
<evidence type="ECO:0000250" key="1"/>
<evidence type="ECO:0000255" key="2"/>
<evidence type="ECO:0000256" key="3">
    <source>
        <dbReference type="SAM" id="MobiDB-lite"/>
    </source>
</evidence>
<evidence type="ECO:0000305" key="4"/>
<sequence>MDPQNSFLLQPRVPTAAPTSGGVSWSRVGEVAILSFVGLICFYLLYLWVLRDLILVLKARQGRSTEELIFGIQAVDRSNPIPNTQAPPSQGNPGPFVPGTG</sequence>